<sequence length="268" mass="29420">MDQEQTPHSPTRHSRSPPSSASGSTSAEPVRSRWSPKPEQILILESIFHSGMVNPPKEETVRIRKMLEKFGAVGDANVFYWFQNRRSRSRRRQRQLQAAAAAADATTNTCDQTMMVSNSLPHHSGSDLGFGGCSTSSNYLFASSSSSYGGGCDNQSNSGMENLLTMSGQMSYHEATHHHYQNHSSNVTSILCPSDQNSNFQYQQGAITVFINGVPTEVTRGGIDMKATFGEDLVLVHSSGVPLPTDEFGFLMHSLQHGEAYFLVPRQT</sequence>
<keyword id="KW-0025">Alternative splicing</keyword>
<keyword id="KW-0217">Developmental protein</keyword>
<keyword id="KW-0238">DNA-binding</keyword>
<keyword id="KW-0371">Homeobox</keyword>
<keyword id="KW-0539">Nucleus</keyword>
<keyword id="KW-1185">Reference proteome</keyword>
<keyword id="KW-0804">Transcription</keyword>
<keyword id="KW-0805">Transcription regulation</keyword>
<dbReference type="EMBL" id="AY251402">
    <property type="protein sequence ID" value="AAP37140.1"/>
    <property type="molecule type" value="mRNA"/>
</dbReference>
<dbReference type="EMBL" id="AC009327">
    <property type="protein sequence ID" value="AAF03478.1"/>
    <property type="status" value="ALT_SEQ"/>
    <property type="molecule type" value="Genomic_DNA"/>
</dbReference>
<dbReference type="EMBL" id="CP002686">
    <property type="protein sequence ID" value="AEE73968.1"/>
    <property type="molecule type" value="Genomic_DNA"/>
</dbReference>
<dbReference type="RefSeq" id="NP_187016.2">
    <molecule id="Q6X7J3-1"/>
    <property type="nucleotide sequence ID" value="NM_111237.3"/>
</dbReference>
<dbReference type="SMR" id="Q6X7J3"/>
<dbReference type="FunCoup" id="Q6X7J3">
    <property type="interactions" value="252"/>
</dbReference>
<dbReference type="IntAct" id="Q6X7J3">
    <property type="interactions" value="1"/>
</dbReference>
<dbReference type="STRING" id="3702.Q6X7J3"/>
<dbReference type="iPTMnet" id="Q6X7J3"/>
<dbReference type="ProteomicsDB" id="242577">
    <molecule id="Q6X7J3-1"/>
</dbReference>
<dbReference type="EnsemblPlants" id="AT3G03660.1">
    <molecule id="Q6X7J3-1"/>
    <property type="protein sequence ID" value="AT3G03660.1"/>
    <property type="gene ID" value="AT3G03660"/>
</dbReference>
<dbReference type="GeneID" id="821196"/>
<dbReference type="Gramene" id="AT3G03660.1">
    <molecule id="Q6X7J3-1"/>
    <property type="protein sequence ID" value="AT3G03660.1"/>
    <property type="gene ID" value="AT3G03660"/>
</dbReference>
<dbReference type="KEGG" id="ath:AT3G03660"/>
<dbReference type="Araport" id="AT3G03660"/>
<dbReference type="TAIR" id="AT3G03660">
    <property type="gene designation" value="WOX11"/>
</dbReference>
<dbReference type="eggNOG" id="ENOG502QUIQ">
    <property type="taxonomic scope" value="Eukaryota"/>
</dbReference>
<dbReference type="HOGENOM" id="CLU_030463_0_0_1"/>
<dbReference type="InParanoid" id="Q6X7J3"/>
<dbReference type="OrthoDB" id="670226at2759"/>
<dbReference type="PRO" id="PR:Q6X7J3"/>
<dbReference type="Proteomes" id="UP000006548">
    <property type="component" value="Chromosome 3"/>
</dbReference>
<dbReference type="ExpressionAtlas" id="Q6X7J3">
    <property type="expression patterns" value="baseline and differential"/>
</dbReference>
<dbReference type="GO" id="GO:0005634">
    <property type="term" value="C:nucleus"/>
    <property type="evidence" value="ECO:0007669"/>
    <property type="project" value="UniProtKB-SubCell"/>
</dbReference>
<dbReference type="GO" id="GO:0003677">
    <property type="term" value="F:DNA binding"/>
    <property type="evidence" value="ECO:0007669"/>
    <property type="project" value="UniProtKB-KW"/>
</dbReference>
<dbReference type="GO" id="GO:0003700">
    <property type="term" value="F:DNA-binding transcription factor activity"/>
    <property type="evidence" value="ECO:0007669"/>
    <property type="project" value="InterPro"/>
</dbReference>
<dbReference type="GO" id="GO:0048830">
    <property type="term" value="P:adventitious root development"/>
    <property type="evidence" value="ECO:0007669"/>
    <property type="project" value="InterPro"/>
</dbReference>
<dbReference type="FunFam" id="1.10.10.60:FF:000118">
    <property type="entry name" value="WUSCHEL-related homeobox 11"/>
    <property type="match status" value="1"/>
</dbReference>
<dbReference type="Gene3D" id="1.10.10.60">
    <property type="entry name" value="Homeodomain-like"/>
    <property type="match status" value="1"/>
</dbReference>
<dbReference type="InterPro" id="IPR001356">
    <property type="entry name" value="HD"/>
</dbReference>
<dbReference type="InterPro" id="IPR009057">
    <property type="entry name" value="Homeodomain-like_sf"/>
</dbReference>
<dbReference type="InterPro" id="IPR044558">
    <property type="entry name" value="WOX11-like"/>
</dbReference>
<dbReference type="PANTHER" id="PTHR46998">
    <property type="entry name" value="WUSCHEL-RELATED HOMEOBOX 11"/>
    <property type="match status" value="1"/>
</dbReference>
<dbReference type="PANTHER" id="PTHR46998:SF2">
    <property type="entry name" value="WUSCHEL-RELATED HOMEOBOX 11"/>
    <property type="match status" value="1"/>
</dbReference>
<dbReference type="Pfam" id="PF00046">
    <property type="entry name" value="Homeodomain"/>
    <property type="match status" value="1"/>
</dbReference>
<dbReference type="SMART" id="SM00389">
    <property type="entry name" value="HOX"/>
    <property type="match status" value="1"/>
</dbReference>
<dbReference type="SUPFAM" id="SSF46689">
    <property type="entry name" value="Homeodomain-like"/>
    <property type="match status" value="1"/>
</dbReference>
<dbReference type="PROSITE" id="PS50071">
    <property type="entry name" value="HOMEOBOX_2"/>
    <property type="match status" value="1"/>
</dbReference>
<reference key="1">
    <citation type="journal article" date="2004" name="Development">
        <title>Expression dynamics of WOX genes mark cell fate decisions during early embryonic patterning in Arabidopsis thaliana.</title>
        <authorList>
            <person name="Haecker A."/>
            <person name="Gross-Hardt R."/>
            <person name="Geiges B."/>
            <person name="Sarkar A."/>
            <person name="Breuninger H."/>
            <person name="Herrmann M."/>
            <person name="Laux T."/>
        </authorList>
    </citation>
    <scope>NUCLEOTIDE SEQUENCE [MRNA]</scope>
    <source>
        <strain>cv. Landsberg erecta</strain>
    </source>
</reference>
<reference key="2">
    <citation type="journal article" date="2000" name="Nature">
        <title>Sequence and analysis of chromosome 3 of the plant Arabidopsis thaliana.</title>
        <authorList>
            <person name="Salanoubat M."/>
            <person name="Lemcke K."/>
            <person name="Rieger M."/>
            <person name="Ansorge W."/>
            <person name="Unseld M."/>
            <person name="Fartmann B."/>
            <person name="Valle G."/>
            <person name="Bloecker H."/>
            <person name="Perez-Alonso M."/>
            <person name="Obermaier B."/>
            <person name="Delseny M."/>
            <person name="Boutry M."/>
            <person name="Grivell L.A."/>
            <person name="Mache R."/>
            <person name="Puigdomenech P."/>
            <person name="De Simone V."/>
            <person name="Choisne N."/>
            <person name="Artiguenave F."/>
            <person name="Robert C."/>
            <person name="Brottier P."/>
            <person name="Wincker P."/>
            <person name="Cattolico L."/>
            <person name="Weissenbach J."/>
            <person name="Saurin W."/>
            <person name="Quetier F."/>
            <person name="Schaefer M."/>
            <person name="Mueller-Auer S."/>
            <person name="Gabel C."/>
            <person name="Fuchs M."/>
            <person name="Benes V."/>
            <person name="Wurmbach E."/>
            <person name="Drzonek H."/>
            <person name="Erfle H."/>
            <person name="Jordan N."/>
            <person name="Bangert S."/>
            <person name="Wiedelmann R."/>
            <person name="Kranz H."/>
            <person name="Voss H."/>
            <person name="Holland R."/>
            <person name="Brandt P."/>
            <person name="Nyakatura G."/>
            <person name="Vezzi A."/>
            <person name="D'Angelo M."/>
            <person name="Pallavicini A."/>
            <person name="Toppo S."/>
            <person name="Simionati B."/>
            <person name="Conrad A."/>
            <person name="Hornischer K."/>
            <person name="Kauer G."/>
            <person name="Loehnert T.-H."/>
            <person name="Nordsiek G."/>
            <person name="Reichelt J."/>
            <person name="Scharfe M."/>
            <person name="Schoen O."/>
            <person name="Bargues M."/>
            <person name="Terol J."/>
            <person name="Climent J."/>
            <person name="Navarro P."/>
            <person name="Collado C."/>
            <person name="Perez-Perez A."/>
            <person name="Ottenwaelder B."/>
            <person name="Duchemin D."/>
            <person name="Cooke R."/>
            <person name="Laudie M."/>
            <person name="Berger-Llauro C."/>
            <person name="Purnelle B."/>
            <person name="Masuy D."/>
            <person name="de Haan M."/>
            <person name="Maarse A.C."/>
            <person name="Alcaraz J.-P."/>
            <person name="Cottet A."/>
            <person name="Casacuberta E."/>
            <person name="Monfort A."/>
            <person name="Argiriou A."/>
            <person name="Flores M."/>
            <person name="Liguori R."/>
            <person name="Vitale D."/>
            <person name="Mannhaupt G."/>
            <person name="Haase D."/>
            <person name="Schoof H."/>
            <person name="Rudd S."/>
            <person name="Zaccaria P."/>
            <person name="Mewes H.-W."/>
            <person name="Mayer K.F.X."/>
            <person name="Kaul S."/>
            <person name="Town C.D."/>
            <person name="Koo H.L."/>
            <person name="Tallon L.J."/>
            <person name="Jenkins J."/>
            <person name="Rooney T."/>
            <person name="Rizzo M."/>
            <person name="Walts A."/>
            <person name="Utterback T."/>
            <person name="Fujii C.Y."/>
            <person name="Shea T.P."/>
            <person name="Creasy T.H."/>
            <person name="Haas B."/>
            <person name="Maiti R."/>
            <person name="Wu D."/>
            <person name="Peterson J."/>
            <person name="Van Aken S."/>
            <person name="Pai G."/>
            <person name="Militscher J."/>
            <person name="Sellers P."/>
            <person name="Gill J.E."/>
            <person name="Feldblyum T.V."/>
            <person name="Preuss D."/>
            <person name="Lin X."/>
            <person name="Nierman W.C."/>
            <person name="Salzberg S.L."/>
            <person name="White O."/>
            <person name="Venter J.C."/>
            <person name="Fraser C.M."/>
            <person name="Kaneko T."/>
            <person name="Nakamura Y."/>
            <person name="Sato S."/>
            <person name="Kato T."/>
            <person name="Asamizu E."/>
            <person name="Sasamoto S."/>
            <person name="Kimura T."/>
            <person name="Idesawa K."/>
            <person name="Kawashima K."/>
            <person name="Kishida Y."/>
            <person name="Kiyokawa C."/>
            <person name="Kohara M."/>
            <person name="Matsumoto M."/>
            <person name="Matsuno A."/>
            <person name="Muraki A."/>
            <person name="Nakayama S."/>
            <person name="Nakazaki N."/>
            <person name="Shinpo S."/>
            <person name="Takeuchi C."/>
            <person name="Wada T."/>
            <person name="Watanabe A."/>
            <person name="Yamada M."/>
            <person name="Yasuda M."/>
            <person name="Tabata S."/>
        </authorList>
    </citation>
    <scope>NUCLEOTIDE SEQUENCE [LARGE SCALE GENOMIC DNA]</scope>
    <source>
        <strain>cv. Columbia</strain>
    </source>
</reference>
<reference key="3">
    <citation type="journal article" date="2017" name="Plant J.">
        <title>Araport11: a complete reannotation of the Arabidopsis thaliana reference genome.</title>
        <authorList>
            <person name="Cheng C.Y."/>
            <person name="Krishnakumar V."/>
            <person name="Chan A.P."/>
            <person name="Thibaud-Nissen F."/>
            <person name="Schobel S."/>
            <person name="Town C.D."/>
        </authorList>
    </citation>
    <scope>GENOME REANNOTATION</scope>
    <source>
        <strain>cv. Columbia</strain>
    </source>
</reference>
<name>WOX11_ARATH</name>
<gene>
    <name type="primary">WOX11</name>
    <name type="ordered locus">At3g03660</name>
    <name type="ORF">T12J13.6</name>
</gene>
<feature type="chain" id="PRO_0000049378" description="WUSCHEL-related homeobox 11">
    <location>
        <begin position="1"/>
        <end position="268"/>
    </location>
</feature>
<feature type="DNA-binding region" description="Homeobox; WUS-type" evidence="2">
    <location>
        <begin position="29"/>
        <end position="93"/>
    </location>
</feature>
<feature type="region of interest" description="Disordered" evidence="3">
    <location>
        <begin position="1"/>
        <end position="35"/>
    </location>
</feature>
<feature type="compositionally biased region" description="Low complexity" evidence="3">
    <location>
        <begin position="16"/>
        <end position="27"/>
    </location>
</feature>
<feature type="sequence conflict" description="In Ref. 1; AAP37140." evidence="4" ref="1">
    <original>D</original>
    <variation>A</variation>
    <location>
        <position position="104"/>
    </location>
</feature>
<feature type="sequence conflict" description="In Ref. 1; AAP37140." evidence="4" ref="1">
    <original>Q</original>
    <variation>H</variation>
    <location>
        <position position="201"/>
    </location>
</feature>
<accession>Q6X7J3</accession>
<accession>Q9SS66</accession>
<proteinExistence type="evidence at transcript level"/>
<comment type="function">
    <text evidence="1">Transcription factor which may be involved in developmental processes.</text>
</comment>
<comment type="subcellular location">
    <subcellularLocation>
        <location evidence="2">Nucleus</location>
    </subcellularLocation>
</comment>
<comment type="alternative products">
    <event type="alternative splicing"/>
    <isoform>
        <id>Q6X7J3-1</id>
        <name>1</name>
        <sequence type="displayed"/>
    </isoform>
    <text>A number of isoforms are produced. According to EST sequences.</text>
</comment>
<comment type="similarity">
    <text evidence="4">Belongs to the WUS homeobox family.</text>
</comment>
<comment type="sequence caution" evidence="4">
    <conflict type="erroneous gene model prediction">
        <sequence resource="EMBL-CDS" id="AAF03478"/>
    </conflict>
</comment>
<organism>
    <name type="scientific">Arabidopsis thaliana</name>
    <name type="common">Mouse-ear cress</name>
    <dbReference type="NCBI Taxonomy" id="3702"/>
    <lineage>
        <taxon>Eukaryota</taxon>
        <taxon>Viridiplantae</taxon>
        <taxon>Streptophyta</taxon>
        <taxon>Embryophyta</taxon>
        <taxon>Tracheophyta</taxon>
        <taxon>Spermatophyta</taxon>
        <taxon>Magnoliopsida</taxon>
        <taxon>eudicotyledons</taxon>
        <taxon>Gunneridae</taxon>
        <taxon>Pentapetalae</taxon>
        <taxon>rosids</taxon>
        <taxon>malvids</taxon>
        <taxon>Brassicales</taxon>
        <taxon>Brassicaceae</taxon>
        <taxon>Camelineae</taxon>
        <taxon>Arabidopsis</taxon>
    </lineage>
</organism>
<evidence type="ECO:0000250" key="1"/>
<evidence type="ECO:0000255" key="2">
    <source>
        <dbReference type="PROSITE-ProRule" id="PRU00108"/>
    </source>
</evidence>
<evidence type="ECO:0000256" key="3">
    <source>
        <dbReference type="SAM" id="MobiDB-lite"/>
    </source>
</evidence>
<evidence type="ECO:0000305" key="4"/>
<protein>
    <recommendedName>
        <fullName>WUSCHEL-related homeobox 11</fullName>
    </recommendedName>
</protein>